<dbReference type="EC" id="1.97.1.12" evidence="1"/>
<dbReference type="EMBL" id="AP006714">
    <property type="protein sequence ID" value="BAD27293.1"/>
    <property type="molecule type" value="Genomic_DNA"/>
</dbReference>
<dbReference type="RefSeq" id="YP_009389571.1">
    <property type="nucleotide sequence ID" value="NC_035224.1"/>
</dbReference>
<dbReference type="SMR" id="Q6ENW3"/>
<dbReference type="GeneID" id="33347805"/>
<dbReference type="GO" id="GO:0009535">
    <property type="term" value="C:chloroplast thylakoid membrane"/>
    <property type="evidence" value="ECO:0007669"/>
    <property type="project" value="UniProtKB-SubCell"/>
</dbReference>
<dbReference type="GO" id="GO:0009522">
    <property type="term" value="C:photosystem I"/>
    <property type="evidence" value="ECO:0007669"/>
    <property type="project" value="UniProtKB-KW"/>
</dbReference>
<dbReference type="GO" id="GO:0051539">
    <property type="term" value="F:4 iron, 4 sulfur cluster binding"/>
    <property type="evidence" value="ECO:0007669"/>
    <property type="project" value="UniProtKB-KW"/>
</dbReference>
<dbReference type="GO" id="GO:0016168">
    <property type="term" value="F:chlorophyll binding"/>
    <property type="evidence" value="ECO:0007669"/>
    <property type="project" value="UniProtKB-KW"/>
</dbReference>
<dbReference type="GO" id="GO:0009055">
    <property type="term" value="F:electron transfer activity"/>
    <property type="evidence" value="ECO:0007669"/>
    <property type="project" value="UniProtKB-UniRule"/>
</dbReference>
<dbReference type="GO" id="GO:0000287">
    <property type="term" value="F:magnesium ion binding"/>
    <property type="evidence" value="ECO:0007669"/>
    <property type="project" value="UniProtKB-UniRule"/>
</dbReference>
<dbReference type="GO" id="GO:0016491">
    <property type="term" value="F:oxidoreductase activity"/>
    <property type="evidence" value="ECO:0007669"/>
    <property type="project" value="UniProtKB-KW"/>
</dbReference>
<dbReference type="GO" id="GO:0015979">
    <property type="term" value="P:photosynthesis"/>
    <property type="evidence" value="ECO:0007669"/>
    <property type="project" value="UniProtKB-UniRule"/>
</dbReference>
<dbReference type="FunFam" id="1.20.1130.10:FF:000001">
    <property type="entry name" value="Photosystem I P700 chlorophyll a apoprotein A2"/>
    <property type="match status" value="1"/>
</dbReference>
<dbReference type="Gene3D" id="1.20.1130.10">
    <property type="entry name" value="Photosystem I PsaA/PsaB"/>
    <property type="match status" value="1"/>
</dbReference>
<dbReference type="HAMAP" id="MF_00458">
    <property type="entry name" value="PSI_PsaA"/>
    <property type="match status" value="1"/>
</dbReference>
<dbReference type="InterPro" id="IPR006243">
    <property type="entry name" value="PSI_PsaA"/>
</dbReference>
<dbReference type="InterPro" id="IPR001280">
    <property type="entry name" value="PSI_PsaA/B"/>
</dbReference>
<dbReference type="InterPro" id="IPR020586">
    <property type="entry name" value="PSI_PsaA/B_CS"/>
</dbReference>
<dbReference type="InterPro" id="IPR036408">
    <property type="entry name" value="PSI_PsaA/B_sf"/>
</dbReference>
<dbReference type="NCBIfam" id="TIGR01335">
    <property type="entry name" value="psaA"/>
    <property type="match status" value="1"/>
</dbReference>
<dbReference type="PANTHER" id="PTHR30128">
    <property type="entry name" value="OUTER MEMBRANE PROTEIN, OMPA-RELATED"/>
    <property type="match status" value="1"/>
</dbReference>
<dbReference type="PANTHER" id="PTHR30128:SF19">
    <property type="entry name" value="PHOTOSYSTEM I P700 CHLOROPHYLL A APOPROTEIN A1-RELATED"/>
    <property type="match status" value="1"/>
</dbReference>
<dbReference type="Pfam" id="PF00223">
    <property type="entry name" value="PsaA_PsaB"/>
    <property type="match status" value="1"/>
</dbReference>
<dbReference type="PIRSF" id="PIRSF002905">
    <property type="entry name" value="PSI_A"/>
    <property type="match status" value="1"/>
</dbReference>
<dbReference type="PRINTS" id="PR00257">
    <property type="entry name" value="PHOTSYSPSAAB"/>
</dbReference>
<dbReference type="SUPFAM" id="SSF81558">
    <property type="entry name" value="Photosystem I subunits PsaA/PsaB"/>
    <property type="match status" value="1"/>
</dbReference>
<dbReference type="PROSITE" id="PS00419">
    <property type="entry name" value="PHOTOSYSTEM_I_PSAAB"/>
    <property type="match status" value="1"/>
</dbReference>
<evidence type="ECO:0000255" key="1">
    <source>
        <dbReference type="HAMAP-Rule" id="MF_00458"/>
    </source>
</evidence>
<sequence length="750" mass="83121">MIIRPSEPEVKIAVDRDPVKTSFEEWARPGHFSRTIAKGPDTTTWIWNLHADAHDFDSHTGDLEEISRKVFSAHFGQLSIIFLWLSGMYFHGARFSNYEAWLSDPTHIGPSAQVVWPIVGQEILNGDVGGGFRGIQITSGFFQIWRASGITSELQLYCTAIGALIFASLMLFAGWFHYHKAAPKLAWFQDVESMLNHHLAGLLGLGSLSWAGHQIHVSLPINQFLDAGVDPKEIPLPHEFILNRDLLAQLYPSFAEGATPFFTLNWSKYAEFLSFRGGLDPITGGLWLSDIAHHHLAIAILFLIAGHMYRTNWGIGHGLKDILEAHKGPFTGQGHKGLYEILTTSWHAQLSLNLAMLGSTTIVVAHHMYSMPPYPYLATDYGTQLSLFTHHMWIGGFLIVGAAAHAAIFMVRDYDPTTRYNDLLDRVLRHRDAIISHLNWVCIFLGFHSFGLYIHNDTMSALGRPQDMFSDTAIQLQPIFAQWIQNIHAGAPGVTAPGATTSTSLTWGGGELVAVGGKVALLPIPLGTADFLVHHIHAFTIHVTVLILLKGVLFARSSRLIPDKANLGFRFPCDGPGRGGTCQVSAWDHVFLGLFWMYNSISVVIFHFSWKMQSDVWGTISDQGIVTHITGGNFAQSSITINGWLRDFLWAQASQVIQSYGSSLSAYGLFFLGAHFVWAFSLMFLFSGRGYWQELIESIVWAHNKLKVAPATQPRALSIIQGRAVGVTHYLLGGIATTWAFFLARIIAVG</sequence>
<protein>
    <recommendedName>
        <fullName evidence="1">Photosystem I P700 chlorophyll a apoprotein A1</fullName>
        <ecNumber evidence="1">1.97.1.12</ecNumber>
    </recommendedName>
    <alternativeName>
        <fullName evidence="1">PSI-A</fullName>
    </alternativeName>
    <alternativeName>
        <fullName evidence="1">PsaA</fullName>
    </alternativeName>
</protein>
<organism>
    <name type="scientific">Saccharum officinarum</name>
    <name type="common">Sugarcane</name>
    <dbReference type="NCBI Taxonomy" id="4547"/>
    <lineage>
        <taxon>Eukaryota</taxon>
        <taxon>Viridiplantae</taxon>
        <taxon>Streptophyta</taxon>
        <taxon>Embryophyta</taxon>
        <taxon>Tracheophyta</taxon>
        <taxon>Spermatophyta</taxon>
        <taxon>Magnoliopsida</taxon>
        <taxon>Liliopsida</taxon>
        <taxon>Poales</taxon>
        <taxon>Poaceae</taxon>
        <taxon>PACMAD clade</taxon>
        <taxon>Panicoideae</taxon>
        <taxon>Andropogonodae</taxon>
        <taxon>Andropogoneae</taxon>
        <taxon>Saccharinae</taxon>
        <taxon>Saccharum</taxon>
        <taxon>Saccharum officinarum species complex</taxon>
    </lineage>
</organism>
<comment type="function">
    <text>PsaA and PsaB bind P700, the primary electron donor of photosystem I (PSI), as well as the electron acceptors A0, A1 and FX. PSI is a plastocyanin-ferredoxin oxidoreductase, converting photonic excitation into a charge separation, which transfers an electron from the donor P700 chlorophyll pair to the spectroscopically characterized acceptors A0, A1, FX, FA and FB in turn. Oxidized P700 is reduced on the lumenal side of the thylakoid membrane by plastocyanin.</text>
</comment>
<comment type="catalytic activity">
    <reaction evidence="1">
        <text>reduced [plastocyanin] + hnu + oxidized [2Fe-2S]-[ferredoxin] = oxidized [plastocyanin] + reduced [2Fe-2S]-[ferredoxin]</text>
        <dbReference type="Rhea" id="RHEA:30407"/>
        <dbReference type="Rhea" id="RHEA-COMP:10000"/>
        <dbReference type="Rhea" id="RHEA-COMP:10001"/>
        <dbReference type="Rhea" id="RHEA-COMP:10039"/>
        <dbReference type="Rhea" id="RHEA-COMP:10040"/>
        <dbReference type="ChEBI" id="CHEBI:29036"/>
        <dbReference type="ChEBI" id="CHEBI:30212"/>
        <dbReference type="ChEBI" id="CHEBI:33737"/>
        <dbReference type="ChEBI" id="CHEBI:33738"/>
        <dbReference type="ChEBI" id="CHEBI:49552"/>
        <dbReference type="EC" id="1.97.1.12"/>
    </reaction>
</comment>
<comment type="cofactor">
    <text evidence="1">P700 is a chlorophyll a/chlorophyll a' dimer, A0 is one or more chlorophyll a, A1 is one or both phylloquinones and FX is a shared 4Fe-4S iron-sulfur center.</text>
</comment>
<comment type="subunit">
    <text evidence="1">The PsaA/B heterodimer binds the P700 chlorophyll special pair and subsequent electron acceptors. PSI consists of a core antenna complex that captures photons, and an electron transfer chain that converts photonic excitation into a charge separation. The eukaryotic PSI reaction center is composed of at least 11 subunits.</text>
</comment>
<comment type="subcellular location">
    <subcellularLocation>
        <location evidence="1">Plastid</location>
        <location evidence="1">Chloroplast thylakoid membrane</location>
        <topology evidence="1">Multi-pass membrane protein</topology>
    </subcellularLocation>
</comment>
<comment type="similarity">
    <text evidence="1">Belongs to the PsaA/PsaB family.</text>
</comment>
<reference key="1">
    <citation type="journal article" date="2004" name="DNA Res.">
        <title>Complete nucleotide sequence of the sugarcane (Saccharum officinarum) chloroplast genome: a comparative analysis of four monocot chloroplast genomes.</title>
        <authorList>
            <person name="Asano T."/>
            <person name="Tsudzuki T."/>
            <person name="Takahashi S."/>
            <person name="Shimada H."/>
            <person name="Kadowaki K."/>
        </authorList>
    </citation>
    <scope>NUCLEOTIDE SEQUENCE [LARGE SCALE GENOMIC DNA]</scope>
</reference>
<geneLocation type="chloroplast"/>
<accession>Q6ENW3</accession>
<feature type="chain" id="PRO_0000088575" description="Photosystem I P700 chlorophyll a apoprotein A1">
    <location>
        <begin position="1"/>
        <end position="750"/>
    </location>
</feature>
<feature type="transmembrane region" description="Helical; Name=I" evidence="1">
    <location>
        <begin position="70"/>
        <end position="93"/>
    </location>
</feature>
<feature type="transmembrane region" description="Helical; Name=II" evidence="1">
    <location>
        <begin position="156"/>
        <end position="179"/>
    </location>
</feature>
<feature type="transmembrane region" description="Helical; Name=III" evidence="1">
    <location>
        <begin position="195"/>
        <end position="219"/>
    </location>
</feature>
<feature type="transmembrane region" description="Helical; Name=IV" evidence="1">
    <location>
        <begin position="291"/>
        <end position="309"/>
    </location>
</feature>
<feature type="transmembrane region" description="Helical; Name=V" evidence="1">
    <location>
        <begin position="346"/>
        <end position="369"/>
    </location>
</feature>
<feature type="transmembrane region" description="Helical; Name=VI" evidence="1">
    <location>
        <begin position="385"/>
        <end position="411"/>
    </location>
</feature>
<feature type="transmembrane region" description="Helical; Name=VII" evidence="1">
    <location>
        <begin position="433"/>
        <end position="455"/>
    </location>
</feature>
<feature type="transmembrane region" description="Helical; Name=VIII" evidence="1">
    <location>
        <begin position="531"/>
        <end position="549"/>
    </location>
</feature>
<feature type="transmembrane region" description="Helical; Name=IX" evidence="1">
    <location>
        <begin position="589"/>
        <end position="610"/>
    </location>
</feature>
<feature type="transmembrane region" description="Helical; Name=X" evidence="1">
    <location>
        <begin position="664"/>
        <end position="686"/>
    </location>
</feature>
<feature type="transmembrane region" description="Helical; Name=XI" evidence="1">
    <location>
        <begin position="724"/>
        <end position="744"/>
    </location>
</feature>
<feature type="binding site" evidence="1">
    <location>
        <position position="573"/>
    </location>
    <ligand>
        <name>[4Fe-4S] cluster</name>
        <dbReference type="ChEBI" id="CHEBI:49883"/>
        <note>ligand shared between dimeric partners</note>
    </ligand>
</feature>
<feature type="binding site" evidence="1">
    <location>
        <position position="582"/>
    </location>
    <ligand>
        <name>[4Fe-4S] cluster</name>
        <dbReference type="ChEBI" id="CHEBI:49883"/>
        <note>ligand shared between dimeric partners</note>
    </ligand>
</feature>
<feature type="binding site" description="axial binding residue" evidence="1">
    <location>
        <position position="675"/>
    </location>
    <ligand>
        <name>chlorophyll a'</name>
        <dbReference type="ChEBI" id="CHEBI:189419"/>
        <label>A1</label>
    </ligand>
    <ligandPart>
        <name>Mg</name>
        <dbReference type="ChEBI" id="CHEBI:25107"/>
    </ligandPart>
</feature>
<feature type="binding site" description="axial binding residue" evidence="1">
    <location>
        <position position="683"/>
    </location>
    <ligand>
        <name>chlorophyll a</name>
        <dbReference type="ChEBI" id="CHEBI:58416"/>
        <label>A3</label>
    </ligand>
    <ligandPart>
        <name>Mg</name>
        <dbReference type="ChEBI" id="CHEBI:25107"/>
    </ligandPart>
</feature>
<feature type="binding site" evidence="1">
    <location>
        <position position="691"/>
    </location>
    <ligand>
        <name>chlorophyll a</name>
        <dbReference type="ChEBI" id="CHEBI:58416"/>
        <label>A3</label>
    </ligand>
</feature>
<feature type="binding site" evidence="1">
    <location>
        <position position="692"/>
    </location>
    <ligand>
        <name>phylloquinone</name>
        <dbReference type="ChEBI" id="CHEBI:18067"/>
        <label>A</label>
    </ligand>
</feature>
<keyword id="KW-0004">4Fe-4S</keyword>
<keyword id="KW-0148">Chlorophyll</keyword>
<keyword id="KW-0150">Chloroplast</keyword>
<keyword id="KW-0157">Chromophore</keyword>
<keyword id="KW-0249">Electron transport</keyword>
<keyword id="KW-0408">Iron</keyword>
<keyword id="KW-0411">Iron-sulfur</keyword>
<keyword id="KW-0460">Magnesium</keyword>
<keyword id="KW-0472">Membrane</keyword>
<keyword id="KW-0479">Metal-binding</keyword>
<keyword id="KW-0560">Oxidoreductase</keyword>
<keyword id="KW-0602">Photosynthesis</keyword>
<keyword id="KW-0603">Photosystem I</keyword>
<keyword id="KW-0934">Plastid</keyword>
<keyword id="KW-0793">Thylakoid</keyword>
<keyword id="KW-0812">Transmembrane</keyword>
<keyword id="KW-1133">Transmembrane helix</keyword>
<keyword id="KW-0813">Transport</keyword>
<name>PSAA_SACOF</name>
<proteinExistence type="inferred from homology"/>
<gene>
    <name evidence="1" type="primary">psaA</name>
</gene>